<sequence>MYQPLLLLPLLLTSAFANPHDPHIHHSLEKRASFPIPSSKGSVTFSSPKTISGTFDGGMKTYGRGVKCTGQDEGGDEDAVFILKDGATLKNAIIGADQIEGVHCEGSCTIENVWWTDVCEDALSLKGSGSGTHKIIGGGARNADDKVIQHNSGGKVIIQDFTVQNFGKLYRACGNCKKQFKRTVKISGVKASSGKALVGINSNYGDTASIKGCATSVKEICVEYEGTNNNSKEPKKKSSGPSSYCKYSEPLSKC</sequence>
<protein>
    <recommendedName>
        <fullName>Pectate lyase E</fullName>
        <ecNumber>4.2.2.2</ecNumber>
    </recommendedName>
</protein>
<comment type="function">
    <text evidence="4">Pectinolytic enzyme consist of four classes of enzymes: pectin lyase, polygalacturonase, pectin methylesterase and rhamnogalacturonase. Among pectinolytic enzymes, pectin lyase is the most important in depolymerization of pectin, since it cleaves internal glycosidic bonds of highly methylated pectins. Favors pectate, the anion, over pectin, the methyl ester.</text>
</comment>
<comment type="catalytic activity">
    <reaction>
        <text>Eliminative cleavage of (1-&gt;4)-alpha-D-galacturonan to give oligosaccharides with 4-deoxy-alpha-D-galact-4-enuronosyl groups at their non-reducing ends.</text>
        <dbReference type="EC" id="4.2.2.2"/>
    </reaction>
</comment>
<comment type="cofactor">
    <cofactor evidence="1">
        <name>Ca(2+)</name>
        <dbReference type="ChEBI" id="CHEBI:29108"/>
    </cofactor>
    <text evidence="1">Binds 1 Ca(2+) ion per subunit.</text>
</comment>
<comment type="biophysicochemical properties">
    <phDependence>
        <text evidence="4">Optimum pH is 9.2.</text>
    </phDependence>
    <temperatureDependence>
        <text evidence="4">Optimum temperature is 37 degrees Celsius.</text>
    </temperatureDependence>
</comment>
<comment type="subcellular location">
    <subcellularLocation>
        <location evidence="5">Secreted</location>
    </subcellularLocation>
</comment>
<comment type="similarity">
    <text evidence="5">Belongs to the polysaccharide lyase 3 family.</text>
</comment>
<reference key="1">
    <citation type="journal article" date="2006" name="Proc. Natl. Acad. Sci. U.S.A.">
        <title>Development and application of a suite of polysaccharide-degrading enzymes for analyzing plant cell walls.</title>
        <authorList>
            <person name="Bauer S."/>
            <person name="Vasu P."/>
            <person name="Persson S."/>
            <person name="Mort A.J."/>
            <person name="Somerville C.R."/>
        </authorList>
    </citation>
    <scope>NUCLEOTIDE SEQUENCE [MRNA]</scope>
    <scope>FUNCTION</scope>
    <scope>BIOPHYSICOCHEMICAL PROPERTIES</scope>
    <source>
        <strain>FGSC A4 / ATCC 38163 / CBS 112.46 / NRRL 194 / M139</strain>
    </source>
</reference>
<reference key="2">
    <citation type="journal article" date="2005" name="Nature">
        <title>Sequencing of Aspergillus nidulans and comparative analysis with A. fumigatus and A. oryzae.</title>
        <authorList>
            <person name="Galagan J.E."/>
            <person name="Calvo S.E."/>
            <person name="Cuomo C."/>
            <person name="Ma L.-J."/>
            <person name="Wortman J.R."/>
            <person name="Batzoglou S."/>
            <person name="Lee S.-I."/>
            <person name="Bastuerkmen M."/>
            <person name="Spevak C.C."/>
            <person name="Clutterbuck J."/>
            <person name="Kapitonov V."/>
            <person name="Jurka J."/>
            <person name="Scazzocchio C."/>
            <person name="Farman M.L."/>
            <person name="Butler J."/>
            <person name="Purcell S."/>
            <person name="Harris S."/>
            <person name="Braus G.H."/>
            <person name="Draht O."/>
            <person name="Busch S."/>
            <person name="D'Enfert C."/>
            <person name="Bouchier C."/>
            <person name="Goldman G.H."/>
            <person name="Bell-Pedersen D."/>
            <person name="Griffiths-Jones S."/>
            <person name="Doonan J.H."/>
            <person name="Yu J."/>
            <person name="Vienken K."/>
            <person name="Pain A."/>
            <person name="Freitag M."/>
            <person name="Selker E.U."/>
            <person name="Archer D.B."/>
            <person name="Penalva M.A."/>
            <person name="Oakley B.R."/>
            <person name="Momany M."/>
            <person name="Tanaka T."/>
            <person name="Kumagai T."/>
            <person name="Asai K."/>
            <person name="Machida M."/>
            <person name="Nierman W.C."/>
            <person name="Denning D.W."/>
            <person name="Caddick M.X."/>
            <person name="Hynes M."/>
            <person name="Paoletti M."/>
            <person name="Fischer R."/>
            <person name="Miller B.L."/>
            <person name="Dyer P.S."/>
            <person name="Sachs M.S."/>
            <person name="Osmani S.A."/>
            <person name="Birren B.W."/>
        </authorList>
    </citation>
    <scope>NUCLEOTIDE SEQUENCE [LARGE SCALE GENOMIC DNA]</scope>
    <source>
        <strain>FGSC A4 / ATCC 38163 / CBS 112.46 / NRRL 194 / M139</strain>
    </source>
</reference>
<reference key="3">
    <citation type="journal article" date="2009" name="Fungal Genet. Biol.">
        <title>The 2008 update of the Aspergillus nidulans genome annotation: a community effort.</title>
        <authorList>
            <person name="Wortman J.R."/>
            <person name="Gilsenan J.M."/>
            <person name="Joardar V."/>
            <person name="Deegan J."/>
            <person name="Clutterbuck J."/>
            <person name="Andersen M.R."/>
            <person name="Archer D."/>
            <person name="Bencina M."/>
            <person name="Braus G."/>
            <person name="Coutinho P."/>
            <person name="von Dohren H."/>
            <person name="Doonan J."/>
            <person name="Driessen A.J."/>
            <person name="Durek P."/>
            <person name="Espeso E."/>
            <person name="Fekete E."/>
            <person name="Flipphi M."/>
            <person name="Estrada C.G."/>
            <person name="Geysens S."/>
            <person name="Goldman G."/>
            <person name="de Groot P.W."/>
            <person name="Hansen K."/>
            <person name="Harris S.D."/>
            <person name="Heinekamp T."/>
            <person name="Helmstaedt K."/>
            <person name="Henrissat B."/>
            <person name="Hofmann G."/>
            <person name="Homan T."/>
            <person name="Horio T."/>
            <person name="Horiuchi H."/>
            <person name="James S."/>
            <person name="Jones M."/>
            <person name="Karaffa L."/>
            <person name="Karanyi Z."/>
            <person name="Kato M."/>
            <person name="Keller N."/>
            <person name="Kelly D.E."/>
            <person name="Kiel J.A."/>
            <person name="Kim J.M."/>
            <person name="van der Klei I.J."/>
            <person name="Klis F.M."/>
            <person name="Kovalchuk A."/>
            <person name="Krasevec N."/>
            <person name="Kubicek C.P."/>
            <person name="Liu B."/>
            <person name="Maccabe A."/>
            <person name="Meyer V."/>
            <person name="Mirabito P."/>
            <person name="Miskei M."/>
            <person name="Mos M."/>
            <person name="Mullins J."/>
            <person name="Nelson D.R."/>
            <person name="Nielsen J."/>
            <person name="Oakley B.R."/>
            <person name="Osmani S.A."/>
            <person name="Pakula T."/>
            <person name="Paszewski A."/>
            <person name="Paulsen I."/>
            <person name="Pilsyk S."/>
            <person name="Pocsi I."/>
            <person name="Punt P.J."/>
            <person name="Ram A.F."/>
            <person name="Ren Q."/>
            <person name="Robellet X."/>
            <person name="Robson G."/>
            <person name="Seiboth B."/>
            <person name="van Solingen P."/>
            <person name="Specht T."/>
            <person name="Sun J."/>
            <person name="Taheri-Talesh N."/>
            <person name="Takeshita N."/>
            <person name="Ussery D."/>
            <person name="vanKuyk P.A."/>
            <person name="Visser H."/>
            <person name="van de Vondervoort P.J."/>
            <person name="de Vries R.P."/>
            <person name="Walton J."/>
            <person name="Xiang X."/>
            <person name="Xiong Y."/>
            <person name="Zeng A.P."/>
            <person name="Brandt B.W."/>
            <person name="Cornell M.J."/>
            <person name="van den Hondel C.A."/>
            <person name="Visser J."/>
            <person name="Oliver S.G."/>
            <person name="Turner G."/>
        </authorList>
    </citation>
    <scope>GENOME REANNOTATION</scope>
    <source>
        <strain>FGSC A4 / ATCC 38163 / CBS 112.46 / NRRL 194 / M139</strain>
    </source>
</reference>
<name>PLYE_EMENI</name>
<organism>
    <name type="scientific">Emericella nidulans (strain FGSC A4 / ATCC 38163 / CBS 112.46 / NRRL 194 / M139)</name>
    <name type="common">Aspergillus nidulans</name>
    <dbReference type="NCBI Taxonomy" id="227321"/>
    <lineage>
        <taxon>Eukaryota</taxon>
        <taxon>Fungi</taxon>
        <taxon>Dikarya</taxon>
        <taxon>Ascomycota</taxon>
        <taxon>Pezizomycotina</taxon>
        <taxon>Eurotiomycetes</taxon>
        <taxon>Eurotiomycetidae</taxon>
        <taxon>Eurotiales</taxon>
        <taxon>Aspergillaceae</taxon>
        <taxon>Aspergillus</taxon>
        <taxon>Aspergillus subgen. Nidulantes</taxon>
    </lineage>
</organism>
<keyword id="KW-0106">Calcium</keyword>
<keyword id="KW-0119">Carbohydrate metabolism</keyword>
<keyword id="KW-0961">Cell wall biogenesis/degradation</keyword>
<keyword id="KW-0325">Glycoprotein</keyword>
<keyword id="KW-0456">Lyase</keyword>
<keyword id="KW-0624">Polysaccharide degradation</keyword>
<keyword id="KW-1185">Reference proteome</keyword>
<keyword id="KW-0964">Secreted</keyword>
<keyword id="KW-0732">Signal</keyword>
<accession>Q5B7Z3</accession>
<accession>C8VHV4</accession>
<accession>Q1HFT8</accession>
<gene>
    <name type="primary">plyE</name>
    <name type="ORF">AN3337</name>
</gene>
<feature type="signal peptide" evidence="2">
    <location>
        <begin position="1"/>
        <end position="17"/>
    </location>
</feature>
<feature type="chain" id="PRO_0000394585" description="Pectate lyase E">
    <location>
        <begin position="18"/>
        <end position="254"/>
    </location>
</feature>
<feature type="region of interest" description="Disordered" evidence="3">
    <location>
        <begin position="227"/>
        <end position="254"/>
    </location>
</feature>
<feature type="compositionally biased region" description="Low complexity" evidence="3">
    <location>
        <begin position="239"/>
        <end position="254"/>
    </location>
</feature>
<feature type="glycosylation site" description="N-linked (GlcNAc...) asparagine" evidence="2">
    <location>
        <position position="229"/>
    </location>
</feature>
<proteinExistence type="evidence at protein level"/>
<evidence type="ECO:0000250" key="1"/>
<evidence type="ECO:0000255" key="2"/>
<evidence type="ECO:0000256" key="3">
    <source>
        <dbReference type="SAM" id="MobiDB-lite"/>
    </source>
</evidence>
<evidence type="ECO:0000269" key="4">
    <source>
    </source>
</evidence>
<evidence type="ECO:0000305" key="5"/>
<dbReference type="EC" id="4.2.2.2"/>
<dbReference type="EMBL" id="DQ490486">
    <property type="protein sequence ID" value="ABF50862.1"/>
    <property type="molecule type" value="mRNA"/>
</dbReference>
<dbReference type="EMBL" id="AACD01000055">
    <property type="protein sequence ID" value="EAA63305.1"/>
    <property type="molecule type" value="Genomic_DNA"/>
</dbReference>
<dbReference type="EMBL" id="BN001306">
    <property type="protein sequence ID" value="CBF82916.1"/>
    <property type="molecule type" value="Genomic_DNA"/>
</dbReference>
<dbReference type="RefSeq" id="XP_660941.1">
    <property type="nucleotide sequence ID" value="XM_655849.1"/>
</dbReference>
<dbReference type="SMR" id="Q5B7Z3"/>
<dbReference type="STRING" id="227321.Q5B7Z3"/>
<dbReference type="CAZy" id="PL3">
    <property type="family name" value="Polysaccharide Lyase Family 3"/>
</dbReference>
<dbReference type="GlyCosmos" id="Q5B7Z3">
    <property type="glycosylation" value="1 site, No reported glycans"/>
</dbReference>
<dbReference type="EnsemblFungi" id="CBF82916">
    <property type="protein sequence ID" value="CBF82916"/>
    <property type="gene ID" value="ANIA_03337"/>
</dbReference>
<dbReference type="KEGG" id="ani:ANIA_03337"/>
<dbReference type="VEuPathDB" id="FungiDB:AN3337"/>
<dbReference type="eggNOG" id="ENOG502QU39">
    <property type="taxonomic scope" value="Eukaryota"/>
</dbReference>
<dbReference type="HOGENOM" id="CLU_044863_3_0_1"/>
<dbReference type="InParanoid" id="Q5B7Z3"/>
<dbReference type="OMA" id="KCTGQVE"/>
<dbReference type="OrthoDB" id="441042at2759"/>
<dbReference type="Proteomes" id="UP000000560">
    <property type="component" value="Chromosome VI"/>
</dbReference>
<dbReference type="GO" id="GO:0005576">
    <property type="term" value="C:extracellular region"/>
    <property type="evidence" value="ECO:0007669"/>
    <property type="project" value="UniProtKB-SubCell"/>
</dbReference>
<dbReference type="GO" id="GO:0030570">
    <property type="term" value="F:pectate lyase activity"/>
    <property type="evidence" value="ECO:0000314"/>
    <property type="project" value="UniProtKB"/>
</dbReference>
<dbReference type="GO" id="GO:0071555">
    <property type="term" value="P:cell wall organization"/>
    <property type="evidence" value="ECO:0007669"/>
    <property type="project" value="UniProtKB-KW"/>
</dbReference>
<dbReference type="GO" id="GO:0045490">
    <property type="term" value="P:pectin catabolic process"/>
    <property type="evidence" value="ECO:0000314"/>
    <property type="project" value="UniProtKB"/>
</dbReference>
<dbReference type="FunFam" id="2.160.20.10:FF:000044">
    <property type="entry name" value="Pectate lyase E"/>
    <property type="match status" value="1"/>
</dbReference>
<dbReference type="Gene3D" id="2.160.20.10">
    <property type="entry name" value="Single-stranded right-handed beta-helix, Pectin lyase-like"/>
    <property type="match status" value="1"/>
</dbReference>
<dbReference type="InterPro" id="IPR004898">
    <property type="entry name" value="Pectate_lyase_PlyH/PlyE-like"/>
</dbReference>
<dbReference type="InterPro" id="IPR012334">
    <property type="entry name" value="Pectin_lyas_fold"/>
</dbReference>
<dbReference type="InterPro" id="IPR011050">
    <property type="entry name" value="Pectin_lyase_fold/virulence"/>
</dbReference>
<dbReference type="PANTHER" id="PTHR33407:SF8">
    <property type="entry name" value="PECTATE LYASE E"/>
    <property type="match status" value="1"/>
</dbReference>
<dbReference type="PANTHER" id="PTHR33407">
    <property type="entry name" value="PECTATE LYASE F-RELATED"/>
    <property type="match status" value="1"/>
</dbReference>
<dbReference type="Pfam" id="PF03211">
    <property type="entry name" value="Pectate_lyase"/>
    <property type="match status" value="1"/>
</dbReference>
<dbReference type="SUPFAM" id="SSF51126">
    <property type="entry name" value="Pectin lyase-like"/>
    <property type="match status" value="1"/>
</dbReference>